<sequence length="177" mass="18811">MSRVGKSPITVPKGAEISINGANITVKGPLGTLTHNLHPSVGLKQEDGVLTVVLNNDSPEAGAQSGTARALVNNMVVGVTTGFERKLSLVGVGYRAAAQGETLKLQLGFSHDIIYNLPKGVKAETPSQTEIIIKGSNKQQVGQVAAEVRAYRSPEPYKGKGVRYVDEVVHLKETKKK</sequence>
<feature type="chain" id="PRO_1000144027" description="Large ribosomal subunit protein uL6">
    <location>
        <begin position="1"/>
        <end position="177"/>
    </location>
</feature>
<dbReference type="EMBL" id="CP001010">
    <property type="protein sequence ID" value="ACB43393.1"/>
    <property type="molecule type" value="Genomic_DNA"/>
</dbReference>
<dbReference type="SMR" id="B1XSR6"/>
<dbReference type="STRING" id="452638.Pnec_0065"/>
<dbReference type="KEGG" id="pne:Pnec_0065"/>
<dbReference type="eggNOG" id="COG0097">
    <property type="taxonomic scope" value="Bacteria"/>
</dbReference>
<dbReference type="HOGENOM" id="CLU_065464_1_2_4"/>
<dbReference type="OrthoDB" id="9805007at2"/>
<dbReference type="GO" id="GO:0022625">
    <property type="term" value="C:cytosolic large ribosomal subunit"/>
    <property type="evidence" value="ECO:0007669"/>
    <property type="project" value="TreeGrafter"/>
</dbReference>
<dbReference type="GO" id="GO:0019843">
    <property type="term" value="F:rRNA binding"/>
    <property type="evidence" value="ECO:0007669"/>
    <property type="project" value="UniProtKB-UniRule"/>
</dbReference>
<dbReference type="GO" id="GO:0003735">
    <property type="term" value="F:structural constituent of ribosome"/>
    <property type="evidence" value="ECO:0007669"/>
    <property type="project" value="InterPro"/>
</dbReference>
<dbReference type="GO" id="GO:0002181">
    <property type="term" value="P:cytoplasmic translation"/>
    <property type="evidence" value="ECO:0007669"/>
    <property type="project" value="TreeGrafter"/>
</dbReference>
<dbReference type="FunFam" id="3.90.930.12:FF:000001">
    <property type="entry name" value="50S ribosomal protein L6"/>
    <property type="match status" value="1"/>
</dbReference>
<dbReference type="FunFam" id="3.90.930.12:FF:000002">
    <property type="entry name" value="50S ribosomal protein L6"/>
    <property type="match status" value="1"/>
</dbReference>
<dbReference type="Gene3D" id="3.90.930.12">
    <property type="entry name" value="Ribosomal protein L6, alpha-beta domain"/>
    <property type="match status" value="2"/>
</dbReference>
<dbReference type="HAMAP" id="MF_01365_B">
    <property type="entry name" value="Ribosomal_uL6_B"/>
    <property type="match status" value="1"/>
</dbReference>
<dbReference type="InterPro" id="IPR000702">
    <property type="entry name" value="Ribosomal_uL6-like"/>
</dbReference>
<dbReference type="InterPro" id="IPR036789">
    <property type="entry name" value="Ribosomal_uL6-like_a/b-dom_sf"/>
</dbReference>
<dbReference type="InterPro" id="IPR020040">
    <property type="entry name" value="Ribosomal_uL6_a/b-dom"/>
</dbReference>
<dbReference type="InterPro" id="IPR019906">
    <property type="entry name" value="Ribosomal_uL6_bac-type"/>
</dbReference>
<dbReference type="InterPro" id="IPR002358">
    <property type="entry name" value="Ribosomal_uL6_CS"/>
</dbReference>
<dbReference type="NCBIfam" id="TIGR03654">
    <property type="entry name" value="L6_bact"/>
    <property type="match status" value="1"/>
</dbReference>
<dbReference type="PANTHER" id="PTHR11655">
    <property type="entry name" value="60S/50S RIBOSOMAL PROTEIN L6/L9"/>
    <property type="match status" value="1"/>
</dbReference>
<dbReference type="PANTHER" id="PTHR11655:SF14">
    <property type="entry name" value="LARGE RIBOSOMAL SUBUNIT PROTEIN UL6M"/>
    <property type="match status" value="1"/>
</dbReference>
<dbReference type="Pfam" id="PF00347">
    <property type="entry name" value="Ribosomal_L6"/>
    <property type="match status" value="2"/>
</dbReference>
<dbReference type="PIRSF" id="PIRSF002162">
    <property type="entry name" value="Ribosomal_L6"/>
    <property type="match status" value="1"/>
</dbReference>
<dbReference type="PRINTS" id="PR00059">
    <property type="entry name" value="RIBOSOMALL6"/>
</dbReference>
<dbReference type="SUPFAM" id="SSF56053">
    <property type="entry name" value="Ribosomal protein L6"/>
    <property type="match status" value="2"/>
</dbReference>
<dbReference type="PROSITE" id="PS00525">
    <property type="entry name" value="RIBOSOMAL_L6_1"/>
    <property type="match status" value="1"/>
</dbReference>
<evidence type="ECO:0000255" key="1">
    <source>
        <dbReference type="HAMAP-Rule" id="MF_01365"/>
    </source>
</evidence>
<evidence type="ECO:0000305" key="2"/>
<proteinExistence type="inferred from homology"/>
<reference key="1">
    <citation type="journal article" date="2013" name="Proc. Natl. Acad. Sci. U.S.A.">
        <title>Polynucleobacter necessarius, a model for genome reduction in both free-living and symbiotic bacteria.</title>
        <authorList>
            <person name="Boscaro V."/>
            <person name="Felletti M."/>
            <person name="Vannini C."/>
            <person name="Ackerman M.S."/>
            <person name="Chain P.S."/>
            <person name="Malfatti S."/>
            <person name="Vergez L.M."/>
            <person name="Shin M."/>
            <person name="Doak T.G."/>
            <person name="Lynch M."/>
            <person name="Petroni G."/>
        </authorList>
    </citation>
    <scope>NUCLEOTIDE SEQUENCE [LARGE SCALE GENOMIC DNA]</scope>
    <source>
        <strain>STIR1</strain>
    </source>
</reference>
<accession>B1XSR6</accession>
<comment type="function">
    <text evidence="1">This protein binds to the 23S rRNA, and is important in its secondary structure. It is located near the subunit interface in the base of the L7/L12 stalk, and near the tRNA binding site of the peptidyltransferase center.</text>
</comment>
<comment type="subunit">
    <text evidence="1">Part of the 50S ribosomal subunit.</text>
</comment>
<comment type="similarity">
    <text evidence="1">Belongs to the universal ribosomal protein uL6 family.</text>
</comment>
<keyword id="KW-0687">Ribonucleoprotein</keyword>
<keyword id="KW-0689">Ribosomal protein</keyword>
<keyword id="KW-0694">RNA-binding</keyword>
<keyword id="KW-0699">rRNA-binding</keyword>
<organism>
    <name type="scientific">Polynucleobacter necessarius subsp. necessarius (strain STIR1)</name>
    <dbReference type="NCBI Taxonomy" id="452638"/>
    <lineage>
        <taxon>Bacteria</taxon>
        <taxon>Pseudomonadati</taxon>
        <taxon>Pseudomonadota</taxon>
        <taxon>Betaproteobacteria</taxon>
        <taxon>Burkholderiales</taxon>
        <taxon>Burkholderiaceae</taxon>
        <taxon>Polynucleobacter</taxon>
    </lineage>
</organism>
<protein>
    <recommendedName>
        <fullName evidence="1">Large ribosomal subunit protein uL6</fullName>
    </recommendedName>
    <alternativeName>
        <fullName evidence="2">50S ribosomal protein L6</fullName>
    </alternativeName>
</protein>
<name>RL6_POLNS</name>
<gene>
    <name evidence="1" type="primary">rplF</name>
    <name type="ordered locus">Pnec_0065</name>
</gene>